<protein>
    <recommendedName>
        <fullName>Non-histone chromosomal protein 6A</fullName>
    </recommendedName>
</protein>
<evidence type="ECO:0000255" key="1">
    <source>
        <dbReference type="PROSITE-ProRule" id="PRU00267"/>
    </source>
</evidence>
<evidence type="ECO:0000256" key="2">
    <source>
        <dbReference type="SAM" id="MobiDB-lite"/>
    </source>
</evidence>
<evidence type="ECO:0000269" key="3">
    <source>
    </source>
</evidence>
<evidence type="ECO:0000269" key="4">
    <source>
    </source>
</evidence>
<evidence type="ECO:0000269" key="5">
    <source>
    </source>
</evidence>
<evidence type="ECO:0000269" key="6">
    <source>
    </source>
</evidence>
<evidence type="ECO:0000269" key="7">
    <source>
    </source>
</evidence>
<evidence type="ECO:0000269" key="8">
    <source>
    </source>
</evidence>
<evidence type="ECO:0000269" key="9">
    <source>
    </source>
</evidence>
<evidence type="ECO:0000269" key="10">
    <source>
    </source>
</evidence>
<evidence type="ECO:0000269" key="11">
    <source>
    </source>
</evidence>
<evidence type="ECO:0000269" key="12">
    <source>
    </source>
</evidence>
<evidence type="ECO:0000269" key="13">
    <source>
    </source>
</evidence>
<evidence type="ECO:0000269" key="14">
    <source>
    </source>
</evidence>
<evidence type="ECO:0000269" key="15">
    <source>
    </source>
</evidence>
<evidence type="ECO:0000269" key="16">
    <source>
    </source>
</evidence>
<evidence type="ECO:0000269" key="17">
    <source>
    </source>
</evidence>
<evidence type="ECO:0000305" key="18"/>
<evidence type="ECO:0007829" key="19">
    <source>
        <dbReference type="PDB" id="1CG7"/>
    </source>
</evidence>
<evidence type="ECO:0007829" key="20">
    <source>
        <dbReference type="PDB" id="1J5N"/>
    </source>
</evidence>
<organism>
    <name type="scientific">Saccharomyces cerevisiae (strain ATCC 204508 / S288c)</name>
    <name type="common">Baker's yeast</name>
    <dbReference type="NCBI Taxonomy" id="559292"/>
    <lineage>
        <taxon>Eukaryota</taxon>
        <taxon>Fungi</taxon>
        <taxon>Dikarya</taxon>
        <taxon>Ascomycota</taxon>
        <taxon>Saccharomycotina</taxon>
        <taxon>Saccharomycetes</taxon>
        <taxon>Saccharomycetales</taxon>
        <taxon>Saccharomycetaceae</taxon>
        <taxon>Saccharomyces</taxon>
    </lineage>
</organism>
<comment type="function">
    <text evidence="4 5 6 7 9 11 12 13 14 15 16">DNA-binding protein that induces severe bending of DNA. Required for DNA-binding by the FACT complex, a general chromatin factor that acts to reorganize nucleosomes. The FACT complex is involved in multiple processes that require DNA as a template such as mRNA elongation, DNA replication and DNA repair. Also augments the fidelity of transcription by RNA polymerase III independently of any role in the FACT complex. Required for transcriptional initiation fidelity of some but not all tRNA genes. Seems to be functionally redundant with NHP6B.</text>
</comment>
<comment type="subunit">
    <text evidence="3 8">Weakly associates with the stable SPT16-POB3 heterodimer to form the FACT (yFACT or SNP) complex, which is associated with nucleosomes. Multiple molecules of NHP6 (NHP6A and/or NHP6B) are required to recruit the SPT16-POB3 heterodimer to DNA.</text>
</comment>
<comment type="interaction">
    <interactant intactId="EBI-12019">
        <id>P11632</id>
    </interactant>
    <interactant intactId="EBI-18410">
        <id>P32597</id>
        <label>STH1</label>
    </interactant>
    <organismsDiffer>false</organismsDiffer>
    <experiments>3</experiments>
</comment>
<comment type="subcellular location">
    <subcellularLocation>
        <location>Nucleus</location>
    </subcellularLocation>
    <subcellularLocation>
        <location>Chromosome</location>
    </subcellularLocation>
    <text>Colocalizes with both RNA polymerase II and some regions that are not transcribed on chromatin.</text>
</comment>
<comment type="miscellaneous">
    <text evidence="10">Present with 3870 molecules/cell in log phase SD medium.</text>
</comment>
<comment type="similarity">
    <text evidence="18">Belongs to the NHP6 family.</text>
</comment>
<name>NHP6A_YEAST</name>
<dbReference type="EMBL" id="X15317">
    <property type="protein sequence ID" value="CAA33377.1"/>
    <property type="molecule type" value="Genomic_DNA"/>
</dbReference>
<dbReference type="EMBL" id="M95912">
    <property type="protein sequence ID" value="AAA34754.1"/>
    <property type="molecule type" value="Genomic_RNA"/>
</dbReference>
<dbReference type="EMBL" id="Z49219">
    <property type="protein sequence ID" value="CAA89171.1"/>
    <property type="molecule type" value="Genomic_DNA"/>
</dbReference>
<dbReference type="EMBL" id="Z71255">
    <property type="protein sequence ID" value="CAA94998.1"/>
    <property type="molecule type" value="Genomic_DNA"/>
</dbReference>
<dbReference type="EMBL" id="AY693230">
    <property type="protein sequence ID" value="AAT93249.1"/>
    <property type="molecule type" value="Genomic_DNA"/>
</dbReference>
<dbReference type="EMBL" id="BK006949">
    <property type="protein sequence ID" value="DAA11475.1"/>
    <property type="molecule type" value="Genomic_DNA"/>
</dbReference>
<dbReference type="PIR" id="A35072">
    <property type="entry name" value="A35072"/>
</dbReference>
<dbReference type="RefSeq" id="NP_015377.1">
    <property type="nucleotide sequence ID" value="NM_001184149.1"/>
</dbReference>
<dbReference type="PDB" id="1CG7">
    <property type="method" value="NMR"/>
    <property type="chains" value="A=1-93"/>
</dbReference>
<dbReference type="PDB" id="1J5N">
    <property type="method" value="NMR"/>
    <property type="chains" value="A=1-93"/>
</dbReference>
<dbReference type="PDB" id="1LWM">
    <property type="method" value="NMR"/>
    <property type="chains" value="A=1-93"/>
</dbReference>
<dbReference type="PDBsum" id="1CG7"/>
<dbReference type="PDBsum" id="1J5N"/>
<dbReference type="PDBsum" id="1LWM"/>
<dbReference type="BMRB" id="P11632"/>
<dbReference type="SMR" id="P11632"/>
<dbReference type="BioGRID" id="36227">
    <property type="interactions" value="188"/>
</dbReference>
<dbReference type="FunCoup" id="P11632">
    <property type="interactions" value="520"/>
</dbReference>
<dbReference type="IntAct" id="P11632">
    <property type="interactions" value="62"/>
</dbReference>
<dbReference type="MINT" id="P11632"/>
<dbReference type="STRING" id="4932.YPR052C"/>
<dbReference type="iPTMnet" id="P11632"/>
<dbReference type="PaxDb" id="4932-YPR052C"/>
<dbReference type="PeptideAtlas" id="P11632"/>
<dbReference type="TopDownProteomics" id="P11632"/>
<dbReference type="EnsemblFungi" id="YPR052C_mRNA">
    <property type="protein sequence ID" value="YPR052C"/>
    <property type="gene ID" value="YPR052C"/>
</dbReference>
<dbReference type="GeneID" id="856165"/>
<dbReference type="KEGG" id="sce:YPR052C"/>
<dbReference type="AGR" id="SGD:S000006256"/>
<dbReference type="SGD" id="S000006256">
    <property type="gene designation" value="NHP6A"/>
</dbReference>
<dbReference type="VEuPathDB" id="FungiDB:YPR052C"/>
<dbReference type="eggNOG" id="KOG0381">
    <property type="taxonomic scope" value="Eukaryota"/>
</dbReference>
<dbReference type="GeneTree" id="ENSGT00940000176448"/>
<dbReference type="HOGENOM" id="CLU_082854_10_3_1"/>
<dbReference type="InParanoid" id="P11632"/>
<dbReference type="OMA" id="MKNMGGK"/>
<dbReference type="OrthoDB" id="1919336at2759"/>
<dbReference type="BioCyc" id="YEAST:G3O-34205-MONOMER"/>
<dbReference type="Reactome" id="R-SCE-140342">
    <property type="pathway name" value="Apoptosis induced DNA fragmentation"/>
</dbReference>
<dbReference type="Reactome" id="R-SCE-163282">
    <property type="pathway name" value="Mitochondrial transcription initiation"/>
</dbReference>
<dbReference type="Reactome" id="R-SCE-5620971">
    <property type="pathway name" value="Pyroptosis"/>
</dbReference>
<dbReference type="Reactome" id="R-SCE-5686938">
    <property type="pathway name" value="Regulation of TLR by endogenous ligand"/>
</dbReference>
<dbReference type="Reactome" id="R-SCE-6798695">
    <property type="pathway name" value="Neutrophil degranulation"/>
</dbReference>
<dbReference type="Reactome" id="R-SCE-9837999">
    <property type="pathway name" value="Mitochondrial protein degradation"/>
</dbReference>
<dbReference type="BioGRID-ORCS" id="856165">
    <property type="hits" value="1 hit in 13 CRISPR screens"/>
</dbReference>
<dbReference type="ChiTaRS" id="NHP6A">
    <property type="organism name" value="yeast"/>
</dbReference>
<dbReference type="EvolutionaryTrace" id="P11632"/>
<dbReference type="PRO" id="PR:P11632"/>
<dbReference type="Proteomes" id="UP000002311">
    <property type="component" value="Chromosome XVI"/>
</dbReference>
<dbReference type="RNAct" id="P11632">
    <property type="molecule type" value="protein"/>
</dbReference>
<dbReference type="GO" id="GO:0005694">
    <property type="term" value="C:chromosome"/>
    <property type="evidence" value="ECO:0007669"/>
    <property type="project" value="UniProtKB-SubCell"/>
</dbReference>
<dbReference type="GO" id="GO:0005634">
    <property type="term" value="C:nucleus"/>
    <property type="evidence" value="ECO:0000314"/>
    <property type="project" value="SGD"/>
</dbReference>
<dbReference type="GO" id="GO:0032993">
    <property type="term" value="C:protein-DNA complex"/>
    <property type="evidence" value="ECO:0000315"/>
    <property type="project" value="CAFA"/>
</dbReference>
<dbReference type="GO" id="GO:0008301">
    <property type="term" value="F:DNA binding, bending"/>
    <property type="evidence" value="ECO:0000314"/>
    <property type="project" value="SGD"/>
</dbReference>
<dbReference type="GO" id="GO:0032407">
    <property type="term" value="F:MutSalpha complex binding"/>
    <property type="evidence" value="ECO:0000314"/>
    <property type="project" value="SGD"/>
</dbReference>
<dbReference type="GO" id="GO:0003676">
    <property type="term" value="F:nucleic acid binding"/>
    <property type="evidence" value="ECO:0000269"/>
    <property type="project" value="DisProt"/>
</dbReference>
<dbReference type="GO" id="GO:0031491">
    <property type="term" value="F:nucleosome binding"/>
    <property type="evidence" value="ECO:0000314"/>
    <property type="project" value="SGD"/>
</dbReference>
<dbReference type="GO" id="GO:0006325">
    <property type="term" value="P:chromatin organization"/>
    <property type="evidence" value="ECO:0000314"/>
    <property type="project" value="SGD"/>
</dbReference>
<dbReference type="GO" id="GO:0006338">
    <property type="term" value="P:chromatin remodeling"/>
    <property type="evidence" value="ECO:0000316"/>
    <property type="project" value="SGD"/>
</dbReference>
<dbReference type="GO" id="GO:0006281">
    <property type="term" value="P:DNA repair"/>
    <property type="evidence" value="ECO:0007669"/>
    <property type="project" value="UniProtKB-KW"/>
</dbReference>
<dbReference type="GO" id="GO:0001195">
    <property type="term" value="P:maintenance of transcriptional fidelity during transcription elongation by RNA polymerase III"/>
    <property type="evidence" value="ECO:0000314"/>
    <property type="project" value="SGD"/>
</dbReference>
<dbReference type="GO" id="GO:0065004">
    <property type="term" value="P:protein-DNA complex assembly"/>
    <property type="evidence" value="ECO:0000315"/>
    <property type="project" value="CAFA"/>
</dbReference>
<dbReference type="GO" id="GO:0051123">
    <property type="term" value="P:RNA polymerase II preinitiation complex assembly"/>
    <property type="evidence" value="ECO:0000314"/>
    <property type="project" value="SGD"/>
</dbReference>
<dbReference type="GO" id="GO:0070898">
    <property type="term" value="P:RNA polymerase III preinitiation complex assembly"/>
    <property type="evidence" value="ECO:0000314"/>
    <property type="project" value="SGD"/>
</dbReference>
<dbReference type="CDD" id="cd01390">
    <property type="entry name" value="HMG-box_NHP6-like"/>
    <property type="match status" value="1"/>
</dbReference>
<dbReference type="DisProt" id="DP00432"/>
<dbReference type="FunFam" id="1.10.30.10:FF:000016">
    <property type="entry name" value="FACT complex subunit SSRP1"/>
    <property type="match status" value="1"/>
</dbReference>
<dbReference type="Gene3D" id="1.10.30.10">
    <property type="entry name" value="High mobility group box domain"/>
    <property type="match status" value="1"/>
</dbReference>
<dbReference type="IDEAL" id="IID50069"/>
<dbReference type="InterPro" id="IPR009071">
    <property type="entry name" value="HMG_box_dom"/>
</dbReference>
<dbReference type="InterPro" id="IPR036910">
    <property type="entry name" value="HMG_box_dom_sf"/>
</dbReference>
<dbReference type="InterPro" id="IPR050342">
    <property type="entry name" value="HMGB"/>
</dbReference>
<dbReference type="PANTHER" id="PTHR48112">
    <property type="entry name" value="HIGH MOBILITY GROUP PROTEIN DSP1"/>
    <property type="match status" value="1"/>
</dbReference>
<dbReference type="PANTHER" id="PTHR48112:SF22">
    <property type="entry name" value="MITOCHONDRIAL TRANSCRIPTION FACTOR A, ISOFORM B"/>
    <property type="match status" value="1"/>
</dbReference>
<dbReference type="Pfam" id="PF00505">
    <property type="entry name" value="HMG_box"/>
    <property type="match status" value="1"/>
</dbReference>
<dbReference type="SMART" id="SM00398">
    <property type="entry name" value="HMG"/>
    <property type="match status" value="1"/>
</dbReference>
<dbReference type="SUPFAM" id="SSF47095">
    <property type="entry name" value="HMG-box"/>
    <property type="match status" value="1"/>
</dbReference>
<dbReference type="PROSITE" id="PS50118">
    <property type="entry name" value="HMG_BOX_2"/>
    <property type="match status" value="1"/>
</dbReference>
<keyword id="KW-0002">3D-structure</keyword>
<keyword id="KW-0158">Chromosome</keyword>
<keyword id="KW-0227">DNA damage</keyword>
<keyword id="KW-0234">DNA repair</keyword>
<keyword id="KW-0238">DNA-binding</keyword>
<keyword id="KW-0539">Nucleus</keyword>
<keyword id="KW-1185">Reference proteome</keyword>
<keyword id="KW-0804">Transcription</keyword>
<keyword id="KW-0805">Transcription regulation</keyword>
<proteinExistence type="evidence at protein level"/>
<gene>
    <name type="primary">NHP6A</name>
    <name type="synonym">NHPA</name>
    <name type="ordered locus">YPR052C</name>
    <name type="ORF">YP9499.09C</name>
</gene>
<feature type="chain" id="PRO_0000048565" description="Non-histone chromosomal protein 6A">
    <location>
        <begin position="1"/>
        <end position="93"/>
    </location>
</feature>
<feature type="DNA-binding region" description="HMG box" evidence="1">
    <location>
        <begin position="21"/>
        <end position="89"/>
    </location>
</feature>
<feature type="region of interest" description="Disordered" evidence="2">
    <location>
        <begin position="1"/>
        <end position="23"/>
    </location>
</feature>
<feature type="region of interest" description="Disordered" evidence="2">
    <location>
        <begin position="69"/>
        <end position="93"/>
    </location>
</feature>
<feature type="compositionally biased region" description="Basic residues" evidence="2">
    <location>
        <begin position="7"/>
        <end position="16"/>
    </location>
</feature>
<feature type="compositionally biased region" description="Basic and acidic residues" evidence="2">
    <location>
        <begin position="69"/>
        <end position="87"/>
    </location>
</feature>
<feature type="mutagenesis site" description="Does not affect affinity for DNA." evidence="17">
    <original>P</original>
    <variation>A</variation>
    <location>
        <position position="18"/>
    </location>
</feature>
<feature type="mutagenesis site" description="Shows a 4-fold reduced affinity for DNA." evidence="17">
    <original>P</original>
    <variation>A</variation>
    <location>
        <position position="21"/>
    </location>
</feature>
<feature type="mutagenesis site" description="Shows a strongly reduced affinity for linear and circular DNA." evidence="17">
    <original>Y</original>
    <variation>D</variation>
    <location>
        <position position="28"/>
    </location>
</feature>
<feature type="mutagenesis site" description="Unable to form 75 bp microcircles." evidence="17">
    <original>M</original>
    <variation>A</variation>
    <variation>D</variation>
    <location>
        <position position="29"/>
    </location>
</feature>
<feature type="mutagenesis site" description="Does not affect affinity for DNA." evidence="17">
    <original>F</original>
    <variation>V</variation>
    <location>
        <position position="30"/>
    </location>
</feature>
<feature type="mutagenesis site" description="Shows a strongly reduced affinity for linear and circular DNA." evidence="17">
    <original>F</original>
    <variation>D</variation>
    <location>
        <position position="31"/>
    </location>
</feature>
<feature type="strand" evidence="20">
    <location>
        <begin position="17"/>
        <end position="19"/>
    </location>
</feature>
<feature type="helix" evidence="19">
    <location>
        <begin position="27"/>
        <end position="35"/>
    </location>
</feature>
<feature type="turn" evidence="19">
    <location>
        <begin position="38"/>
        <end position="42"/>
    </location>
</feature>
<feature type="helix" evidence="19">
    <location>
        <begin position="48"/>
        <end position="51"/>
    </location>
</feature>
<feature type="turn" evidence="19">
    <location>
        <begin position="52"/>
        <end position="54"/>
    </location>
</feature>
<feature type="helix" evidence="19">
    <location>
        <begin position="55"/>
        <end position="60"/>
    </location>
</feature>
<feature type="helix" evidence="19">
    <location>
        <begin position="63"/>
        <end position="74"/>
    </location>
</feature>
<feature type="helix" evidence="19">
    <location>
        <begin position="77"/>
        <end position="80"/>
    </location>
</feature>
<feature type="helix" evidence="19">
    <location>
        <begin position="83"/>
        <end position="91"/>
    </location>
</feature>
<accession>P11632</accession>
<accession>D6W459</accession>
<sequence>MVTPREPKKRTTRKKKDPNAPKRALSAYMFFANENRDIVRSENPDITFGQVGKKLGEKWKALTPEEKQPYEAKAQADKKRYESEKELYNATLA</sequence>
<reference key="1">
    <citation type="journal article" date="1990" name="J. Biol. Chem.">
        <title>Duplicated NHP6 genes of Saccharomyces cerevisiae encode proteins homologous to bovine high mobility group protein 1.</title>
        <authorList>
            <person name="Kolodrubetz D."/>
            <person name="Burgum A."/>
        </authorList>
    </citation>
    <scope>NUCLEOTIDE SEQUENCE [GENOMIC DNA]</scope>
    <source>
        <strain>DBY1091 / DKY1</strain>
    </source>
</reference>
<reference key="2">
    <citation type="journal article" date="1992" name="J. Biol. Chem.">
        <title>Localized mutagenesis and evidence for post-transcriptional regulation of MAK3. A putative N-acetyltransferase required for double-stranded RNA virus propagation in Saccharomyces cerevisiae.</title>
        <authorList>
            <person name="Tercero J.C."/>
            <person name="Riles L.E."/>
            <person name="Wickner R.B."/>
        </authorList>
    </citation>
    <scope>NUCLEOTIDE SEQUENCE [GENOMIC DNA]</scope>
</reference>
<reference key="3">
    <citation type="journal article" date="1997" name="Nature">
        <title>The nucleotide sequence of Saccharomyces cerevisiae chromosome XVI.</title>
        <authorList>
            <person name="Bussey H."/>
            <person name="Storms R.K."/>
            <person name="Ahmed A."/>
            <person name="Albermann K."/>
            <person name="Allen E."/>
            <person name="Ansorge W."/>
            <person name="Araujo R."/>
            <person name="Aparicio A."/>
            <person name="Barrell B.G."/>
            <person name="Badcock K."/>
            <person name="Benes V."/>
            <person name="Botstein D."/>
            <person name="Bowman S."/>
            <person name="Brueckner M."/>
            <person name="Carpenter J."/>
            <person name="Cherry J.M."/>
            <person name="Chung E."/>
            <person name="Churcher C.M."/>
            <person name="Coster F."/>
            <person name="Davis K."/>
            <person name="Davis R.W."/>
            <person name="Dietrich F.S."/>
            <person name="Delius H."/>
            <person name="DiPaolo T."/>
            <person name="Dubois E."/>
            <person name="Duesterhoeft A."/>
            <person name="Duncan M."/>
            <person name="Floeth M."/>
            <person name="Fortin N."/>
            <person name="Friesen J.D."/>
            <person name="Fritz C."/>
            <person name="Goffeau A."/>
            <person name="Hall J."/>
            <person name="Hebling U."/>
            <person name="Heumann K."/>
            <person name="Hilbert H."/>
            <person name="Hillier L.W."/>
            <person name="Hunicke-Smith S."/>
            <person name="Hyman R.W."/>
            <person name="Johnston M."/>
            <person name="Kalman S."/>
            <person name="Kleine K."/>
            <person name="Komp C."/>
            <person name="Kurdi O."/>
            <person name="Lashkari D."/>
            <person name="Lew H."/>
            <person name="Lin A."/>
            <person name="Lin D."/>
            <person name="Louis E.J."/>
            <person name="Marathe R."/>
            <person name="Messenguy F."/>
            <person name="Mewes H.-W."/>
            <person name="Mirtipati S."/>
            <person name="Moestl D."/>
            <person name="Mueller-Auer S."/>
            <person name="Namath A."/>
            <person name="Nentwich U."/>
            <person name="Oefner P."/>
            <person name="Pearson D."/>
            <person name="Petel F.X."/>
            <person name="Pohl T.M."/>
            <person name="Purnelle B."/>
            <person name="Rajandream M.A."/>
            <person name="Rechmann S."/>
            <person name="Rieger M."/>
            <person name="Riles L."/>
            <person name="Roberts D."/>
            <person name="Schaefer M."/>
            <person name="Scharfe M."/>
            <person name="Scherens B."/>
            <person name="Schramm S."/>
            <person name="Schroeder M."/>
            <person name="Sdicu A.-M."/>
            <person name="Tettelin H."/>
            <person name="Urrestarazu L.A."/>
            <person name="Ushinsky S."/>
            <person name="Vierendeels F."/>
            <person name="Vissers S."/>
            <person name="Voss H."/>
            <person name="Walsh S.V."/>
            <person name="Wambutt R."/>
            <person name="Wang Y."/>
            <person name="Wedler E."/>
            <person name="Wedler H."/>
            <person name="Winnett E."/>
            <person name="Zhong W.-W."/>
            <person name="Zollner A."/>
            <person name="Vo D.H."/>
            <person name="Hani J."/>
        </authorList>
    </citation>
    <scope>NUCLEOTIDE SEQUENCE [LARGE SCALE GENOMIC DNA]</scope>
    <source>
        <strain>ATCC 204508 / S288c</strain>
    </source>
</reference>
<reference key="4">
    <citation type="journal article" date="2014" name="G3 (Bethesda)">
        <title>The reference genome sequence of Saccharomyces cerevisiae: Then and now.</title>
        <authorList>
            <person name="Engel S.R."/>
            <person name="Dietrich F.S."/>
            <person name="Fisk D.G."/>
            <person name="Binkley G."/>
            <person name="Balakrishnan R."/>
            <person name="Costanzo M.C."/>
            <person name="Dwight S.S."/>
            <person name="Hitz B.C."/>
            <person name="Karra K."/>
            <person name="Nash R.S."/>
            <person name="Weng S."/>
            <person name="Wong E.D."/>
            <person name="Lloyd P."/>
            <person name="Skrzypek M.S."/>
            <person name="Miyasato S.R."/>
            <person name="Simison M."/>
            <person name="Cherry J.M."/>
        </authorList>
    </citation>
    <scope>GENOME REANNOTATION</scope>
    <source>
        <strain>ATCC 204508 / S288c</strain>
    </source>
</reference>
<reference key="5">
    <citation type="journal article" date="2007" name="Genome Res.">
        <title>Approaching a complete repository of sequence-verified protein-encoding clones for Saccharomyces cerevisiae.</title>
        <authorList>
            <person name="Hu Y."/>
            <person name="Rolfs A."/>
            <person name="Bhullar B."/>
            <person name="Murthy T.V.S."/>
            <person name="Zhu C."/>
            <person name="Berger M.F."/>
            <person name="Camargo A.A."/>
            <person name="Kelley F."/>
            <person name="McCarron S."/>
            <person name="Jepson D."/>
            <person name="Richardson A."/>
            <person name="Raphael J."/>
            <person name="Moreira D."/>
            <person name="Taycher E."/>
            <person name="Zuo D."/>
            <person name="Mohr S."/>
            <person name="Kane M.F."/>
            <person name="Williamson J."/>
            <person name="Simpson A.J.G."/>
            <person name="Bulyk M.L."/>
            <person name="Harlow E."/>
            <person name="Marsischky G."/>
            <person name="Kolodner R.D."/>
            <person name="LaBaer J."/>
        </authorList>
    </citation>
    <scope>NUCLEOTIDE SEQUENCE [GENOMIC DNA]</scope>
    <source>
        <strain>ATCC 204508 / S288c</strain>
    </source>
</reference>
<reference key="6">
    <citation type="journal article" date="1995" name="J. Biol. Chem.">
        <title>DNA looping by Saccharomyces cerevisiae high mobility group proteins NHP6A/B. Consequences for nucleoprotein complex assembly and chromatin condensation.</title>
        <authorList>
            <person name="Paull T.T."/>
            <person name="Johnson R.C."/>
        </authorList>
    </citation>
    <scope>FUNCTION</scope>
</reference>
<reference key="7">
    <citation type="journal article" date="1996" name="Genes Dev.">
        <title>Yeast HMG proteins NHP6A/B potentiate promoter-specific transcriptional activation in vivo and assembly of preinitiation complexes in vitro.</title>
        <authorList>
            <person name="Paull T.T."/>
            <person name="Carey M."/>
            <person name="Johnson R.C."/>
        </authorList>
    </citation>
    <scope>FUNCTION</scope>
</reference>
<reference key="8">
    <citation type="journal article" date="1998" name="J. Biol. Chem.">
        <title>Determinants of DNA binding and bending by the Saccharomyces cerevisiae high mobility group protein NHP6A that are important for its biological activities. Role of the unique N terminus and putative intercalating methionine.</title>
        <authorList>
            <person name="Yen Y.-M."/>
            <person name="Wong B."/>
            <person name="Johnson R.C."/>
        </authorList>
    </citation>
    <scope>DNA-BINDING</scope>
    <scope>MUTAGENESIS OF PRO-18; PRO-21; TYR-28; MET-29; PHE-30 AND PHE-31</scope>
</reference>
<reference key="9">
    <citation type="journal article" date="2000" name="EMBO J.">
        <title>Chromatin-mediated transcriptional regulation by the yeast architectural factors NHP6A and NHP6B.</title>
        <authorList>
            <person name="Moreira J.M.A."/>
            <person name="Holmberg S."/>
        </authorList>
    </citation>
    <scope>FUNCTION</scope>
</reference>
<reference key="10">
    <citation type="journal article" date="2001" name="EMBO J.">
        <title>Spt16-Pob3 and the HMG protein Nhp6 combine to form the nucleosome-binding factor SPN.</title>
        <authorList>
            <person name="Formosa T."/>
            <person name="Eriksson P."/>
            <person name="Wittmeyer J."/>
            <person name="Ginn J."/>
            <person name="Yu Y."/>
            <person name="Stillman D.J."/>
        </authorList>
    </citation>
    <scope>ASSOCIATION WITH THE SPT16-POB3 DIMER AND NUCLEOSOMES</scope>
    <scope>FUNCTION OF THE FACT COMPLEX</scope>
</reference>
<reference key="11">
    <citation type="journal article" date="2001" name="Mol. Cell">
        <title>Nhp6, an HMG1 protein, functions in SNR6 transcription by RNA polymerase III in S. cerevisiae.</title>
        <authorList>
            <person name="Kruppa M."/>
            <person name="Moir R.D."/>
            <person name="Kolodrubetz D."/>
            <person name="Willis I.M."/>
        </authorList>
    </citation>
    <scope>FUNCTION</scope>
</reference>
<reference key="12">
    <citation type="journal article" date="2001" name="Mol. Cell">
        <authorList>
            <person name="Kruppa M."/>
            <person name="Moir R.D."/>
            <person name="Kolodrubetz D."/>
            <person name="Willis I.M."/>
        </authorList>
    </citation>
    <scope>ERRATUM OF PUBMED:11239460</scope>
</reference>
<reference key="13">
    <citation type="journal article" date="2001" name="Mol. Cell. Biol.">
        <title>High-mobility-group proteins NHP6A and NHP6B participate in activation of the RNA polymerase III SNR6 gene.</title>
        <authorList>
            <person name="Lopez S."/>
            <person name="Livingstone-Zatchej M."/>
            <person name="Jourdain S."/>
            <person name="Thoma F."/>
            <person name="Sentenac A."/>
            <person name="Marsolier M.-C."/>
        </authorList>
    </citation>
    <scope>FUNCTION</scope>
</reference>
<reference key="14">
    <citation type="journal article" date="2001" name="Mol. Cell. Biol.">
        <title>A bipartite yeast SSRP1 analog comprised of Pob3 and Nhp6 proteins modulates transcription.</title>
        <authorList>
            <person name="Brewster N.K."/>
            <person name="Johnston G.C."/>
            <person name="Singer R.A."/>
        </authorList>
    </citation>
    <scope>ASSOCIATION WITH THE SPT16-POB3 DIMER</scope>
</reference>
<reference key="15">
    <citation type="journal article" date="2001" name="Traffic">
        <title>Nuclear localization of the Saccharomyces cerevisiae HMG protein NHP6A occurs by a Ran-independent nonclassical pathway.</title>
        <authorList>
            <person name="Yen Y.-M."/>
            <person name="Roberts P.M."/>
            <person name="Johnson R.C."/>
        </authorList>
    </citation>
    <scope>SUBCELLULAR LOCATION</scope>
</reference>
<reference key="16">
    <citation type="journal article" date="2003" name="J. Biol. Chem.">
        <title>Multiple Nhp6 molecules are required to recruit Spt16-Pob3 to form yFACT complexes and to reorganize nucleosomes.</title>
        <authorList>
            <person name="Ruone S."/>
            <person name="Rhoades A.R."/>
            <person name="Formosa T."/>
        </authorList>
    </citation>
    <scope>FUNCTION</scope>
</reference>
<reference key="17">
    <citation type="journal article" date="2003" name="Mol. Cell. Biol.">
        <title>The FACT complex travels with elongating RNA polymerase II and is important for the fidelity of transcriptional initiation in vivo.</title>
        <authorList>
            <person name="Mason P.B."/>
            <person name="Struhl K."/>
        </authorList>
    </citation>
    <scope>FUNCTION OF THE FACT COMPLEX</scope>
</reference>
<reference key="18">
    <citation type="journal article" date="2003" name="Nature">
        <title>Global analysis of protein expression in yeast.</title>
        <authorList>
            <person name="Ghaemmaghami S."/>
            <person name="Huh W.-K."/>
            <person name="Bower K."/>
            <person name="Howson R.W."/>
            <person name="Belle A."/>
            <person name="Dephoure N."/>
            <person name="O'Shea E.K."/>
            <person name="Weissman J.S."/>
        </authorList>
    </citation>
    <scope>LEVEL OF PROTEIN EXPRESSION [LARGE SCALE ANALYSIS]</scope>
</reference>
<reference key="19">
    <citation type="journal article" date="2004" name="Biochemistry">
        <title>Micromechanical analysis of the binding of DNA-bending proteins HMGB1, NHP6A, and HU reveals their ability to form highly stable DNA-protein complexes.</title>
        <authorList>
            <person name="Skoko D."/>
            <person name="Wong B."/>
            <person name="Johnson R.C."/>
            <person name="Marko J.F."/>
        </authorList>
    </citation>
    <scope>DNA-BINDING</scope>
</reference>
<reference key="20">
    <citation type="journal article" date="2004" name="EMBO J.">
        <title>Transitions in RNA polymerase II elongation complexes at the 3' ends of genes.</title>
        <authorList>
            <person name="Kim M."/>
            <person name="Ahn S.-H."/>
            <person name="Krogan N.J."/>
            <person name="Greenblatt J.F."/>
            <person name="Buratowski S."/>
        </authorList>
    </citation>
    <scope>SUBCELLULAR LOCATION</scope>
</reference>
<reference key="21">
    <citation type="journal article" date="2004" name="Mol. Cell. Biol.">
        <title>Structural features of nucleosomes reorganized by yeast FACT and its HMG box component, Nhp6.</title>
        <authorList>
            <person name="Rhoades A.R."/>
            <person name="Ruone S."/>
            <person name="Formosa T."/>
        </authorList>
    </citation>
    <scope>FUNCTION OF THE FACT COMPLEX</scope>
</reference>
<reference key="22">
    <citation type="journal article" date="2005" name="Mol. Cell. Biol.">
        <title>The yeast FACT complex has a role in transcriptional initiation.</title>
        <authorList>
            <person name="Biswas D."/>
            <person name="Yu Y."/>
            <person name="Prall M."/>
            <person name="Formosa T."/>
            <person name="Stillman D.J."/>
        </authorList>
    </citation>
    <scope>FUNCTION OF THE FACT COMPLEX</scope>
</reference>
<reference key="23">
    <citation type="journal article" date="2006" name="J. Biol. Chem.">
        <title>Nhp6 is a transcriptional initiation fidelity factor for RNA polymerase III transcription in vitro and in vivo.</title>
        <authorList>
            <person name="Kassavetis G.A."/>
            <person name="Steiner D.F."/>
        </authorList>
    </citation>
    <scope>FUNCTION</scope>
</reference>
<reference key="24">
    <citation type="journal article" date="1999" name="EMBO J.">
        <title>Solution structure of the HMG protein NHP6A and its interaction with DNA reveals the structural determinants for non-sequence-specific binding.</title>
        <authorList>
            <person name="Allain F.H.-T."/>
            <person name="Yen Y.-M."/>
            <person name="Masse J.E."/>
            <person name="Schultze P."/>
            <person name="Dieckmann T."/>
            <person name="Johnson R.C."/>
            <person name="Feigon J."/>
        </authorList>
    </citation>
    <scope>STRUCTURE BY NMR IN COMPLEX WITH DNA</scope>
</reference>
<reference key="25">
    <citation type="journal article" date="2002" name="J. Mol. Biol.">
        <title>The S. cerevisiae architectural HMGB protein NHP6A complexed with DNA: DNA and protein conformational changes upon binding.</title>
        <authorList>
            <person name="Masse J.E."/>
            <person name="Wong B."/>
            <person name="Yen Y.-M."/>
            <person name="Allain F.H.-T."/>
            <person name="Johnson R.C."/>
            <person name="Feigon J."/>
        </authorList>
    </citation>
    <scope>STRUCTURE BY NMR IN COMPLEX WITH DNA</scope>
</reference>